<name>GLB2A_ANAIN</name>
<accession>P14821</accession>
<protein>
    <recommendedName>
        <fullName>Globin-2 A chain</fullName>
    </recommendedName>
    <alternativeName>
        <fullName>Globin II A chain</fullName>
    </alternativeName>
    <alternativeName>
        <fullName>HBII-A</fullName>
    </alternativeName>
</protein>
<feature type="initiator methionine" description="Removed" evidence="2">
    <location>
        <position position="1"/>
    </location>
</feature>
<feature type="chain" id="PRO_0000052488" description="Globin-2 A chain">
    <location>
        <begin position="2"/>
        <end position="150"/>
    </location>
</feature>
<feature type="domain" description="Globin" evidence="1">
    <location>
        <begin position="10"/>
        <end position="150"/>
    </location>
</feature>
<feature type="binding site" description="proximal binding residue">
    <location>
        <position position="102"/>
    </location>
    <ligand>
        <name>heme b</name>
        <dbReference type="ChEBI" id="CHEBI:60344"/>
    </ligand>
    <ligandPart>
        <name>Fe</name>
        <dbReference type="ChEBI" id="CHEBI:18248"/>
    </ligandPart>
</feature>
<feature type="modified residue" description="Blocked amino end (Val)" evidence="2">
    <location>
        <position position="2"/>
    </location>
</feature>
<feature type="helix" evidence="4">
    <location>
        <begin position="3"/>
        <end position="10"/>
    </location>
</feature>
<feature type="helix" evidence="4">
    <location>
        <begin position="13"/>
        <end position="26"/>
    </location>
</feature>
<feature type="helix" evidence="4">
    <location>
        <begin position="27"/>
        <end position="29"/>
    </location>
</feature>
<feature type="helix" evidence="4">
    <location>
        <begin position="30"/>
        <end position="44"/>
    </location>
</feature>
<feature type="helix" evidence="4">
    <location>
        <begin position="46"/>
        <end position="51"/>
    </location>
</feature>
<feature type="strand" evidence="4">
    <location>
        <begin position="54"/>
        <end position="56"/>
    </location>
</feature>
<feature type="helix" evidence="4">
    <location>
        <begin position="58"/>
        <end position="63"/>
    </location>
</feature>
<feature type="helix" evidence="4">
    <location>
        <begin position="65"/>
        <end position="83"/>
    </location>
</feature>
<feature type="turn" evidence="4">
    <location>
        <begin position="84"/>
        <end position="86"/>
    </location>
</feature>
<feature type="helix" evidence="4">
    <location>
        <begin position="88"/>
        <end position="103"/>
    </location>
</feature>
<feature type="turn" evidence="4">
    <location>
        <begin position="104"/>
        <end position="106"/>
    </location>
</feature>
<feature type="helix" evidence="4">
    <location>
        <begin position="109"/>
        <end position="112"/>
    </location>
</feature>
<feature type="helix" evidence="4">
    <location>
        <begin position="113"/>
        <end position="115"/>
    </location>
</feature>
<feature type="helix" evidence="4">
    <location>
        <begin position="116"/>
        <end position="127"/>
    </location>
</feature>
<feature type="helix" evidence="4">
    <location>
        <begin position="128"/>
        <end position="130"/>
    </location>
</feature>
<feature type="helix" evidence="4">
    <location>
        <begin position="133"/>
        <end position="149"/>
    </location>
</feature>
<keyword id="KW-0002">3D-structure</keyword>
<keyword id="KW-0903">Direct protein sequencing</keyword>
<keyword id="KW-0349">Heme</keyword>
<keyword id="KW-0408">Iron</keyword>
<keyword id="KW-0479">Metal-binding</keyword>
<keyword id="KW-0561">Oxygen transport</keyword>
<keyword id="KW-0813">Transport</keyword>
<evidence type="ECO:0000255" key="1">
    <source>
        <dbReference type="PROSITE-ProRule" id="PRU00238"/>
    </source>
</evidence>
<evidence type="ECO:0000269" key="2">
    <source>
    </source>
</evidence>
<evidence type="ECO:0000269" key="3">
    <source>
    </source>
</evidence>
<evidence type="ECO:0007829" key="4">
    <source>
        <dbReference type="PDB" id="4HRR"/>
    </source>
</evidence>
<dbReference type="EMBL" id="X71386">
    <property type="protein sequence ID" value="CAA50509.1"/>
    <property type="molecule type" value="mRNA"/>
</dbReference>
<dbReference type="EMBL" id="S83524">
    <property type="protein sequence ID" value="AAL96376.1"/>
    <property type="molecule type" value="Genomic_DNA"/>
</dbReference>
<dbReference type="EMBL" id="X98566">
    <property type="protein sequence ID" value="CAA67176.1"/>
    <property type="molecule type" value="Genomic_DNA"/>
</dbReference>
<dbReference type="PIR" id="S39980">
    <property type="entry name" value="S39980"/>
</dbReference>
<dbReference type="PDB" id="4HRR">
    <property type="method" value="X-ray"/>
    <property type="resolution" value="1.25 A"/>
    <property type="chains" value="A/C/E/G=2-150"/>
</dbReference>
<dbReference type="PDB" id="4HRT">
    <property type="method" value="X-ray"/>
    <property type="resolution" value="1.46 A"/>
    <property type="chains" value="A/C/E/G=5-150"/>
</dbReference>
<dbReference type="PDBsum" id="4HRR"/>
<dbReference type="PDBsum" id="4HRT"/>
<dbReference type="SMR" id="P14821"/>
<dbReference type="EvolutionaryTrace" id="P14821"/>
<dbReference type="GO" id="GO:0020037">
    <property type="term" value="F:heme binding"/>
    <property type="evidence" value="ECO:0007669"/>
    <property type="project" value="InterPro"/>
</dbReference>
<dbReference type="GO" id="GO:0046872">
    <property type="term" value="F:metal ion binding"/>
    <property type="evidence" value="ECO:0007669"/>
    <property type="project" value="UniProtKB-KW"/>
</dbReference>
<dbReference type="GO" id="GO:0019825">
    <property type="term" value="F:oxygen binding"/>
    <property type="evidence" value="ECO:0007669"/>
    <property type="project" value="InterPro"/>
</dbReference>
<dbReference type="GO" id="GO:0005344">
    <property type="term" value="F:oxygen carrier activity"/>
    <property type="evidence" value="ECO:0007669"/>
    <property type="project" value="UniProtKB-KW"/>
</dbReference>
<dbReference type="CDD" id="cd01040">
    <property type="entry name" value="Mb-like"/>
    <property type="match status" value="1"/>
</dbReference>
<dbReference type="Gene3D" id="1.10.490.10">
    <property type="entry name" value="Globins"/>
    <property type="match status" value="1"/>
</dbReference>
<dbReference type="InterPro" id="IPR000971">
    <property type="entry name" value="Globin"/>
</dbReference>
<dbReference type="InterPro" id="IPR050532">
    <property type="entry name" value="Globin-like_OT"/>
</dbReference>
<dbReference type="InterPro" id="IPR009050">
    <property type="entry name" value="Globin-like_sf"/>
</dbReference>
<dbReference type="InterPro" id="IPR012292">
    <property type="entry name" value="Globin/Proto"/>
</dbReference>
<dbReference type="InterPro" id="IPR044399">
    <property type="entry name" value="Mb-like_M"/>
</dbReference>
<dbReference type="PANTHER" id="PTHR46458">
    <property type="entry name" value="BLR2807 PROTEIN"/>
    <property type="match status" value="1"/>
</dbReference>
<dbReference type="PANTHER" id="PTHR46458:SF1">
    <property type="entry name" value="GEO09476P1"/>
    <property type="match status" value="1"/>
</dbReference>
<dbReference type="Pfam" id="PF00042">
    <property type="entry name" value="Globin"/>
    <property type="match status" value="1"/>
</dbReference>
<dbReference type="SUPFAM" id="SSF46458">
    <property type="entry name" value="Globin-like"/>
    <property type="match status" value="1"/>
</dbReference>
<dbReference type="PROSITE" id="PS01033">
    <property type="entry name" value="GLOBIN"/>
    <property type="match status" value="1"/>
</dbReference>
<organism>
    <name type="scientific">Anadara inaequivalvis</name>
    <name type="common">Inequivalve ark</name>
    <name type="synonym">Scapharca inaequivalvis</name>
    <dbReference type="NCBI Taxonomy" id="2784303"/>
    <lineage>
        <taxon>Eukaryota</taxon>
        <taxon>Metazoa</taxon>
        <taxon>Spiralia</taxon>
        <taxon>Lophotrochozoa</taxon>
        <taxon>Mollusca</taxon>
        <taxon>Bivalvia</taxon>
        <taxon>Autobranchia</taxon>
        <taxon>Pteriomorphia</taxon>
        <taxon>Arcoida</taxon>
        <taxon>Arcoidea</taxon>
        <taxon>Arcidae</taxon>
        <taxon>Anadara</taxon>
    </lineage>
</organism>
<comment type="subunit">
    <text evidence="3">Heterotetramer of two alpha chains and two beta chains.</text>
</comment>
<comment type="similarity">
    <text evidence="1">Belongs to the globin family.</text>
</comment>
<proteinExistence type="evidence at protein level"/>
<sequence>MVADAVAKVCGSEAIKANLRRSWGVLSADIEATGLMLMSNLFTLRPDTKTYFTRLGDVQKGKANSKLRGHAITLTYALNNFVDSLDDPSRLKCVVEKFAVNHINRKISGDAFGAIVEPMKETLKARMGNYYSDDVAGAWAALVGVVQAAL</sequence>
<reference key="1">
    <citation type="journal article" date="1993" name="FEBS Lett.">
        <title>Cooperative homodimeric hemoglobin from Scapharca inaequivalvis. cDNA cloning and expression of the fully functional protein in E. coli.</title>
        <authorList>
            <person name="Gambacurta A."/>
            <person name="Piro M.C."/>
            <person name="Ascoli F."/>
        </authorList>
    </citation>
    <scope>NUCLEOTIDE SEQUENCE [MRNA]</scope>
</reference>
<reference key="2">
    <citation type="journal article" date="1996" name="J. Mol. Evol.">
        <title>Scapharca inaequivalvis tetrameric hemoglobin A and B chains: cDNA sequencing and genomic organization.</title>
        <authorList>
            <person name="Piro M.C."/>
            <person name="Gambacurta A."/>
            <person name="Ascoli F."/>
        </authorList>
    </citation>
    <scope>NUCLEOTIDE SEQUENCE [GENOMIC DNA]</scope>
</reference>
<reference key="3">
    <citation type="journal article" date="1989" name="FEBS Lett.">
        <title>Scapharca hemoglobins, type cases of a novel mode of chain assembly and heme-heme communication. Amino acid sequence and subunit interactions of the tetrameric component.</title>
        <authorList>
            <person name="Petruzzelli R."/>
            <person name="Boffi A."/>
            <person name="Barra D."/>
            <person name="Bossa F."/>
            <person name="Ascoli F."/>
            <person name="Chiancone E."/>
        </authorList>
    </citation>
    <scope>PROTEIN SEQUENCE OF 2-150</scope>
</reference>
<reference key="4">
    <citation type="submission" date="1996-10" db="EMBL/GenBank/DDBJ databases">
        <authorList>
            <person name="Gambacurta A."/>
        </authorList>
    </citation>
    <scope>NUCLEOTIDE SEQUENCE OF 41-113</scope>
</reference>
<reference key="5">
    <citation type="journal article" date="1995" name="J. Mol. Biol.">
        <title>The 2.0 A crystal structure of Scapharca tetrameric hemoglobin: cooperative dimers within an allosteric tetramer.</title>
        <authorList>
            <person name="Royer W.E. Jr."/>
            <person name="Heard K.S."/>
            <person name="Harrington D.J."/>
            <person name="Chiancone E."/>
        </authorList>
    </citation>
    <scope>X-RAY CRYSTALLOGRAPHY (2.0 ANGSTROMS) IN COMPLEX WITH HEME</scope>
    <scope>SUBUNIT</scope>
</reference>